<protein>
    <recommendedName>
        <fullName evidence="1">Acetylglutamate kinase</fullName>
        <ecNumber evidence="1">2.7.2.8</ecNumber>
    </recommendedName>
    <alternativeName>
        <fullName evidence="1">N-acetyl-L-glutamate 5-phosphotransferase</fullName>
    </alternativeName>
    <alternativeName>
        <fullName evidence="1">NAG kinase</fullName>
        <shortName evidence="1">NAGK</shortName>
    </alternativeName>
</protein>
<evidence type="ECO:0000255" key="1">
    <source>
        <dbReference type="HAMAP-Rule" id="MF_00082"/>
    </source>
</evidence>
<accession>P69365</accession>
<accession>P31595</accession>
<keyword id="KW-0028">Amino-acid biosynthesis</keyword>
<keyword id="KW-0055">Arginine biosynthesis</keyword>
<keyword id="KW-0067">ATP-binding</keyword>
<keyword id="KW-0150">Chloroplast</keyword>
<keyword id="KW-0418">Kinase</keyword>
<keyword id="KW-0547">Nucleotide-binding</keyword>
<keyword id="KW-0934">Plastid</keyword>
<keyword id="KW-0808">Transferase</keyword>
<geneLocation type="chloroplast"/>
<organism>
    <name type="scientific">Porphyra purpurea</name>
    <name type="common">Red seaweed</name>
    <name type="synonym">Ulva purpurea</name>
    <dbReference type="NCBI Taxonomy" id="2787"/>
    <lineage>
        <taxon>Eukaryota</taxon>
        <taxon>Rhodophyta</taxon>
        <taxon>Bangiophyceae</taxon>
        <taxon>Bangiales</taxon>
        <taxon>Bangiaceae</taxon>
        <taxon>Porphyra</taxon>
    </lineage>
</organism>
<comment type="function">
    <text evidence="1">Catalyzes the ATP-dependent phosphorylation of N-acetyl-L-glutamate.</text>
</comment>
<comment type="catalytic activity">
    <reaction evidence="1">
        <text>N-acetyl-L-glutamate + ATP = N-acetyl-L-glutamyl 5-phosphate + ADP</text>
        <dbReference type="Rhea" id="RHEA:14629"/>
        <dbReference type="ChEBI" id="CHEBI:30616"/>
        <dbReference type="ChEBI" id="CHEBI:44337"/>
        <dbReference type="ChEBI" id="CHEBI:57936"/>
        <dbReference type="ChEBI" id="CHEBI:456216"/>
        <dbReference type="EC" id="2.7.2.8"/>
    </reaction>
</comment>
<comment type="pathway">
    <text evidence="1">Amino-acid biosynthesis; L-arginine biosynthesis; N(2)-acetyl-L-ornithine from L-glutamate: step 2/4.</text>
</comment>
<comment type="subcellular location">
    <subcellularLocation>
        <location evidence="1">Plastid</location>
        <location evidence="1">Chloroplast</location>
    </subcellularLocation>
</comment>
<comment type="similarity">
    <text evidence="1">Belongs to the acetylglutamate kinase family. ArgB subfamily.</text>
</comment>
<name>ARGB_PORPU</name>
<feature type="chain" id="PRO_0000112709" description="Acetylglutamate kinase">
    <location>
        <begin position="1"/>
        <end position="283"/>
    </location>
</feature>
<feature type="binding site" evidence="1">
    <location>
        <begin position="63"/>
        <end position="64"/>
    </location>
    <ligand>
        <name>substrate</name>
    </ligand>
</feature>
<feature type="binding site" evidence="1">
    <location>
        <position position="85"/>
    </location>
    <ligand>
        <name>substrate</name>
    </ligand>
</feature>
<feature type="binding site" evidence="1">
    <location>
        <position position="178"/>
    </location>
    <ligand>
        <name>substrate</name>
    </ligand>
</feature>
<feature type="site" description="Transition state stabilizer" evidence="1">
    <location>
        <position position="28"/>
    </location>
</feature>
<feature type="site" description="Transition state stabilizer" evidence="1">
    <location>
        <position position="241"/>
    </location>
</feature>
<gene>
    <name evidence="1" type="primary">argB</name>
</gene>
<reference key="1">
    <citation type="journal article" date="1995" name="Plant Mol. Biol. Rep.">
        <title>Complete nucleotide sequence of the Porphyra purpurea chloroplast genome.</title>
        <authorList>
            <person name="Reith M.E."/>
            <person name="Munholland J."/>
        </authorList>
    </citation>
    <scope>NUCLEOTIDE SEQUENCE [LARGE SCALE GENOMIC DNA]</scope>
    <source>
        <strain>Avonport</strain>
    </source>
</reference>
<proteinExistence type="inferred from homology"/>
<sequence length="283" mass="30449">MLTNTERVKVLSDVTILQKFSSRIIVIKYGGAAMKNQKLKDHVISDLVFLSFIGLRPILVHGGGPEINFWLDQLKILPKFENGVRVTDQPTMDIVEMVLVGRVNKDLVASINKQGGKSVGLSGKDGLLITSRPSDKPNLGFVGEVQNVDTNLLEILINNNYIPVIASVAADKQGQSYNINADTVAGEIAARLNAEKLILLTDTPGILRNASDATTLISHLSIQEARDLTKTAVISGGMIPKVNCCIRSLAQGVASAHILDGRIDHALLLEILTDQGIGSMLVV</sequence>
<dbReference type="EC" id="2.7.2.8" evidence="1"/>
<dbReference type="EMBL" id="U38804">
    <property type="protein sequence ID" value="AAC08214.1"/>
    <property type="molecule type" value="Genomic_DNA"/>
</dbReference>
<dbReference type="PIR" id="S73249">
    <property type="entry name" value="S73249"/>
</dbReference>
<dbReference type="RefSeq" id="NP_053938.1">
    <property type="nucleotide sequence ID" value="NC_000925.1"/>
</dbReference>
<dbReference type="SMR" id="P69365"/>
<dbReference type="IntAct" id="P69365">
    <property type="interactions" value="3"/>
</dbReference>
<dbReference type="GeneID" id="809960"/>
<dbReference type="UniPathway" id="UPA00068">
    <property type="reaction ID" value="UER00107"/>
</dbReference>
<dbReference type="GO" id="GO:0009507">
    <property type="term" value="C:chloroplast"/>
    <property type="evidence" value="ECO:0007669"/>
    <property type="project" value="UniProtKB-SubCell"/>
</dbReference>
<dbReference type="GO" id="GO:0003991">
    <property type="term" value="F:acetylglutamate kinase activity"/>
    <property type="evidence" value="ECO:0007669"/>
    <property type="project" value="UniProtKB-UniRule"/>
</dbReference>
<dbReference type="GO" id="GO:0005524">
    <property type="term" value="F:ATP binding"/>
    <property type="evidence" value="ECO:0007669"/>
    <property type="project" value="UniProtKB-UniRule"/>
</dbReference>
<dbReference type="GO" id="GO:0042450">
    <property type="term" value="P:arginine biosynthetic process via ornithine"/>
    <property type="evidence" value="ECO:0007669"/>
    <property type="project" value="UniProtKB-UniRule"/>
</dbReference>
<dbReference type="GO" id="GO:0006526">
    <property type="term" value="P:L-arginine biosynthetic process"/>
    <property type="evidence" value="ECO:0007669"/>
    <property type="project" value="UniProtKB-UniPathway"/>
</dbReference>
<dbReference type="CDD" id="cd04250">
    <property type="entry name" value="AAK_NAGK-C"/>
    <property type="match status" value="1"/>
</dbReference>
<dbReference type="FunFam" id="3.40.1160.10:FF:000004">
    <property type="entry name" value="Acetylglutamate kinase"/>
    <property type="match status" value="1"/>
</dbReference>
<dbReference type="Gene3D" id="3.40.1160.10">
    <property type="entry name" value="Acetylglutamate kinase-like"/>
    <property type="match status" value="1"/>
</dbReference>
<dbReference type="HAMAP" id="MF_00082">
    <property type="entry name" value="ArgB"/>
    <property type="match status" value="1"/>
</dbReference>
<dbReference type="InterPro" id="IPR036393">
    <property type="entry name" value="AceGlu_kinase-like_sf"/>
</dbReference>
<dbReference type="InterPro" id="IPR004662">
    <property type="entry name" value="AcgluKinase_fam"/>
</dbReference>
<dbReference type="InterPro" id="IPR037528">
    <property type="entry name" value="ArgB"/>
</dbReference>
<dbReference type="InterPro" id="IPR001048">
    <property type="entry name" value="Asp/Glu/Uridylate_kinase"/>
</dbReference>
<dbReference type="InterPro" id="IPR001057">
    <property type="entry name" value="Glu/AcGlu_kinase"/>
</dbReference>
<dbReference type="InterPro" id="IPR041727">
    <property type="entry name" value="NAGK-C"/>
</dbReference>
<dbReference type="NCBIfam" id="TIGR00761">
    <property type="entry name" value="argB"/>
    <property type="match status" value="1"/>
</dbReference>
<dbReference type="PANTHER" id="PTHR23342">
    <property type="entry name" value="N-ACETYLGLUTAMATE SYNTHASE"/>
    <property type="match status" value="1"/>
</dbReference>
<dbReference type="PANTHER" id="PTHR23342:SF0">
    <property type="entry name" value="N-ACETYLGLUTAMATE SYNTHASE, MITOCHONDRIAL"/>
    <property type="match status" value="1"/>
</dbReference>
<dbReference type="Pfam" id="PF00696">
    <property type="entry name" value="AA_kinase"/>
    <property type="match status" value="1"/>
</dbReference>
<dbReference type="PIRSF" id="PIRSF000728">
    <property type="entry name" value="NAGK"/>
    <property type="match status" value="1"/>
</dbReference>
<dbReference type="PRINTS" id="PR00474">
    <property type="entry name" value="GLU5KINASE"/>
</dbReference>
<dbReference type="SUPFAM" id="SSF53633">
    <property type="entry name" value="Carbamate kinase-like"/>
    <property type="match status" value="1"/>
</dbReference>